<gene>
    <name type="primary">krt18-b</name>
</gene>
<organism>
    <name type="scientific">Xenopus laevis</name>
    <name type="common">African clawed frog</name>
    <dbReference type="NCBI Taxonomy" id="8355"/>
    <lineage>
        <taxon>Eukaryota</taxon>
        <taxon>Metazoa</taxon>
        <taxon>Chordata</taxon>
        <taxon>Craniata</taxon>
        <taxon>Vertebrata</taxon>
        <taxon>Euteleostomi</taxon>
        <taxon>Amphibia</taxon>
        <taxon>Batrachia</taxon>
        <taxon>Anura</taxon>
        <taxon>Pipoidea</taxon>
        <taxon>Pipidae</taxon>
        <taxon>Xenopodinae</taxon>
        <taxon>Xenopus</taxon>
        <taxon>Xenopus</taxon>
    </lineage>
</organism>
<accession>Q7SY65</accession>
<reference evidence="6 7" key="1">
    <citation type="submission" date="2003-07" db="EMBL/GenBank/DDBJ databases">
        <authorList>
            <consortium name="NIH - Xenopus Gene Collection (XGC) project"/>
        </authorList>
    </citation>
    <scope>NUCLEOTIDE SEQUENCE [LARGE SCALE MRNA]</scope>
    <source>
        <tissue evidence="7">Tadpole</tissue>
    </source>
</reference>
<proteinExistence type="evidence at transcript level"/>
<feature type="initiator methionine" description="Removed" evidence="2">
    <location>
        <position position="1"/>
    </location>
</feature>
<feature type="chain" id="PRO_0000289077" description="Keratin, type I cytoskeletal 18-B">
    <location>
        <begin position="2"/>
        <end position="432"/>
    </location>
</feature>
<feature type="domain" description="IF rod" evidence="4">
    <location>
        <begin position="83"/>
        <end position="393"/>
    </location>
</feature>
<feature type="region of interest" description="Disordered" evidence="5">
    <location>
        <begin position="1"/>
        <end position="44"/>
    </location>
</feature>
<feature type="region of interest" description="Head" evidence="3">
    <location>
        <begin position="2"/>
        <end position="82"/>
    </location>
</feature>
<feature type="region of interest" description="Coil 1A" evidence="3">
    <location>
        <begin position="83"/>
        <end position="118"/>
    </location>
</feature>
<feature type="region of interest" description="Linker 1" evidence="3">
    <location>
        <begin position="119"/>
        <end position="134"/>
    </location>
</feature>
<feature type="region of interest" description="Coil 1B" evidence="3">
    <location>
        <begin position="135"/>
        <end position="226"/>
    </location>
</feature>
<feature type="region of interest" description="Linker 12" evidence="3">
    <location>
        <begin position="227"/>
        <end position="250"/>
    </location>
</feature>
<feature type="region of interest" description="Coil 2" evidence="3">
    <location>
        <begin position="251"/>
        <end position="388"/>
    </location>
</feature>
<feature type="region of interest" description="Tail" evidence="3">
    <location>
        <begin position="389"/>
        <end position="432"/>
    </location>
</feature>
<feature type="compositionally biased region" description="Low complexity" evidence="5">
    <location>
        <begin position="1"/>
        <end position="21"/>
    </location>
</feature>
<feature type="site" description="Cleavage; by caspases" evidence="1">
    <location>
        <begin position="240"/>
        <end position="241"/>
    </location>
</feature>
<feature type="site" description="Stutter" evidence="3">
    <location>
        <position position="333"/>
    </location>
</feature>
<protein>
    <recommendedName>
        <fullName>Keratin, type I cytoskeletal 18-B</fullName>
    </recommendedName>
    <alternativeName>
        <fullName>Cytokeratin-18-B</fullName>
        <shortName>CK-18-B</shortName>
    </alternativeName>
    <alternativeName>
        <fullName>Keratin-18-B</fullName>
        <shortName>K18-B</shortName>
    </alternativeName>
</protein>
<keyword id="KW-0175">Coiled coil</keyword>
<keyword id="KW-0403">Intermediate filament</keyword>
<keyword id="KW-0416">Keratin</keyword>
<keyword id="KW-0597">Phosphoprotein</keyword>
<keyword id="KW-1185">Reference proteome</keyword>
<sequence>MSYSRSMYSSSSVVGGSPYRSLSSAPRFAPGSSAASVHAGPGGSGARISVSRVSSVGSGFGGGFSGGFSGVSNVSLMGGAQNEKETMQDLNDRLASYLERVRSLETANKELEVQIRQHTEKKGPAKDWSPYYKAIEDLKKQVFDSTVDNSQLVLQIDNARLAADDFRVKYEAELAIRMSVETDIGGLRKLIDDTNISRLNLENEIESLKEELIFLKKNHQDDVNELQAQIARSAVTVEVDAPKSQDLGKIMAELRAQYDGLAQKNREDVEKWYQSKVEEHTMQVNIDTQELQTSKNSVTELRRTMQSLEIELESLRNQKASLEGTLHDTEARYAMELEMLGGTAMARESELVQVRSDCQRQQQEYQALLNTKMKLEAEIHTYRRLLEGDSFDLQDAVPTVTTQTVKKVITTTQRIVDGKVVAESNDTEVLKA</sequence>
<name>K118B_XENLA</name>
<dbReference type="EMBL" id="BC054993">
    <property type="protein sequence ID" value="AAH54993.1"/>
    <property type="molecule type" value="mRNA"/>
</dbReference>
<dbReference type="SMR" id="Q7SY65"/>
<dbReference type="BioGRID" id="98746">
    <property type="interactions" value="2"/>
</dbReference>
<dbReference type="IntAct" id="Q7SY65">
    <property type="interactions" value="1"/>
</dbReference>
<dbReference type="DNASU" id="380504"/>
<dbReference type="GeneID" id="380504"/>
<dbReference type="KEGG" id="xla:380504"/>
<dbReference type="AGR" id="Xenbase:XB-GENE-6256523"/>
<dbReference type="CTD" id="380504"/>
<dbReference type="Xenbase" id="XB-GENE-6256523">
    <property type="gene designation" value="krt18.L"/>
</dbReference>
<dbReference type="OrthoDB" id="2441647at2759"/>
<dbReference type="Proteomes" id="UP000186698">
    <property type="component" value="Chromosome 2L"/>
</dbReference>
<dbReference type="Bgee" id="380504">
    <property type="expression patterns" value="Expressed in neurula embryo and 19 other cell types or tissues"/>
</dbReference>
<dbReference type="GO" id="GO:0005856">
    <property type="term" value="C:cytoskeleton"/>
    <property type="evidence" value="ECO:0000318"/>
    <property type="project" value="GO_Central"/>
</dbReference>
<dbReference type="GO" id="GO:0045095">
    <property type="term" value="C:keratin filament"/>
    <property type="evidence" value="ECO:0000318"/>
    <property type="project" value="GO_Central"/>
</dbReference>
<dbReference type="GO" id="GO:0005198">
    <property type="term" value="F:structural molecule activity"/>
    <property type="evidence" value="ECO:0007669"/>
    <property type="project" value="InterPro"/>
</dbReference>
<dbReference type="GO" id="GO:0045104">
    <property type="term" value="P:intermediate filament cytoskeleton organization"/>
    <property type="evidence" value="ECO:0000318"/>
    <property type="project" value="GO_Central"/>
</dbReference>
<dbReference type="FunFam" id="1.20.5.1160:FF:000002">
    <property type="entry name" value="Type I keratin 10"/>
    <property type="match status" value="1"/>
</dbReference>
<dbReference type="FunFam" id="1.20.5.170:FF:000002">
    <property type="entry name" value="Type I keratin KA11"/>
    <property type="match status" value="1"/>
</dbReference>
<dbReference type="FunFam" id="1.20.5.500:FF:000001">
    <property type="entry name" value="Type II keratin 23"/>
    <property type="match status" value="1"/>
</dbReference>
<dbReference type="Gene3D" id="1.20.5.170">
    <property type="match status" value="1"/>
</dbReference>
<dbReference type="Gene3D" id="1.20.5.500">
    <property type="entry name" value="Single helix bin"/>
    <property type="match status" value="1"/>
</dbReference>
<dbReference type="Gene3D" id="1.20.5.1160">
    <property type="entry name" value="Vasodilator-stimulated phosphoprotein"/>
    <property type="match status" value="1"/>
</dbReference>
<dbReference type="InterPro" id="IPR018039">
    <property type="entry name" value="IF_conserved"/>
</dbReference>
<dbReference type="InterPro" id="IPR039008">
    <property type="entry name" value="IF_rod_dom"/>
</dbReference>
<dbReference type="InterPro" id="IPR002957">
    <property type="entry name" value="Keratin_I"/>
</dbReference>
<dbReference type="PANTHER" id="PTHR23239">
    <property type="entry name" value="INTERMEDIATE FILAMENT"/>
    <property type="match status" value="1"/>
</dbReference>
<dbReference type="PANTHER" id="PTHR23239:SF349">
    <property type="entry name" value="KERATIN, TYPE I CYTOSKELETAL 18"/>
    <property type="match status" value="1"/>
</dbReference>
<dbReference type="Pfam" id="PF00038">
    <property type="entry name" value="Filament"/>
    <property type="match status" value="1"/>
</dbReference>
<dbReference type="PRINTS" id="PR01248">
    <property type="entry name" value="TYPE1KERATIN"/>
</dbReference>
<dbReference type="SMART" id="SM01391">
    <property type="entry name" value="Filament"/>
    <property type="match status" value="1"/>
</dbReference>
<dbReference type="SUPFAM" id="SSF64593">
    <property type="entry name" value="Intermediate filament protein, coiled coil region"/>
    <property type="match status" value="2"/>
</dbReference>
<dbReference type="PROSITE" id="PS00226">
    <property type="entry name" value="IF_ROD_1"/>
    <property type="match status" value="1"/>
</dbReference>
<dbReference type="PROSITE" id="PS51842">
    <property type="entry name" value="IF_ROD_2"/>
    <property type="match status" value="1"/>
</dbReference>
<evidence type="ECO:0000250" key="1"/>
<evidence type="ECO:0000250" key="2">
    <source>
        <dbReference type="UniProtKB" id="P05783"/>
    </source>
</evidence>
<evidence type="ECO:0000255" key="3"/>
<evidence type="ECO:0000255" key="4">
    <source>
        <dbReference type="PROSITE-ProRule" id="PRU01188"/>
    </source>
</evidence>
<evidence type="ECO:0000256" key="5">
    <source>
        <dbReference type="SAM" id="MobiDB-lite"/>
    </source>
</evidence>
<evidence type="ECO:0000305" key="6"/>
<evidence type="ECO:0000312" key="7">
    <source>
        <dbReference type="EMBL" id="AAH54993.1"/>
    </source>
</evidence>
<comment type="function">
    <text evidence="1">When phosphorylated, plays a role in filament reorganization.</text>
</comment>
<comment type="subunit">
    <text evidence="1">Heterotetramer of two type I and two type II keratins. Keratin-18 associates with keratin-8 (By similarity).</text>
</comment>
<comment type="PTM">
    <text evidence="1">Phosphorylated.</text>
</comment>
<comment type="PTM">
    <text evidence="1">Proteolytically cleaved by caspases during epithelial cell apoptosis.</text>
</comment>
<comment type="miscellaneous">
    <text evidence="6">There are two types of cytoskeletal and microfibrillar keratin: I (acidic; 40-55 kDa) and II (neutral to basic; 56-70 kDa).</text>
</comment>
<comment type="similarity">
    <text evidence="4">Belongs to the intermediate filament family.</text>
</comment>